<dbReference type="EMBL" id="AC134885">
    <property type="status" value="NOT_ANNOTATED_CDS"/>
    <property type="molecule type" value="Genomic_DNA"/>
</dbReference>
<dbReference type="EMBL" id="DP000009">
    <property type="protein sequence ID" value="ABF95828.1"/>
    <property type="molecule type" value="Genomic_DNA"/>
</dbReference>
<dbReference type="EMBL" id="AP008209">
    <property type="protein sequence ID" value="BAF11962.1"/>
    <property type="status" value="ALT_SEQ"/>
    <property type="molecule type" value="Genomic_DNA"/>
</dbReference>
<dbReference type="EMBL" id="AP014959">
    <property type="status" value="NOT_ANNOTATED_CDS"/>
    <property type="molecule type" value="Genomic_DNA"/>
</dbReference>
<dbReference type="EMBL" id="CM000140">
    <property type="protein sequence ID" value="EAZ26845.1"/>
    <property type="molecule type" value="Genomic_DNA"/>
</dbReference>
<dbReference type="EMBL" id="AJ427977">
    <property type="protein sequence ID" value="CAD20998.1"/>
    <property type="molecule type" value="Genomic_DNA"/>
</dbReference>
<dbReference type="RefSeq" id="XP_015630461.1">
    <property type="nucleotide sequence ID" value="XM_015774975.1"/>
</dbReference>
<dbReference type="RefSeq" id="XP_015630465.1">
    <property type="nucleotide sequence ID" value="XM_015774979.1"/>
</dbReference>
<dbReference type="FunCoup" id="Q8VXB5">
    <property type="interactions" value="79"/>
</dbReference>
<dbReference type="STRING" id="39947.Q8VXB5"/>
<dbReference type="GlyCosmos" id="Q8VXB5">
    <property type="glycosylation" value="1 site, No reported glycans"/>
</dbReference>
<dbReference type="PaxDb" id="39947-Q8VXB5"/>
<dbReference type="EnsemblPlants" id="Os03t0337500-01">
    <property type="protein sequence ID" value="Os03t0337500-01"/>
    <property type="gene ID" value="Os03g0337500"/>
</dbReference>
<dbReference type="GeneID" id="9271735"/>
<dbReference type="Gramene" id="Os03t0337500-01">
    <property type="protein sequence ID" value="Os03t0337500-01"/>
    <property type="gene ID" value="Os03g0337500"/>
</dbReference>
<dbReference type="KEGG" id="osa:9271735"/>
<dbReference type="eggNOG" id="ENOG502QPSA">
    <property type="taxonomic scope" value="Eukaryota"/>
</dbReference>
<dbReference type="InParanoid" id="Q8VXB5"/>
<dbReference type="OrthoDB" id="504708at2759"/>
<dbReference type="Proteomes" id="UP000000763">
    <property type="component" value="Chromosome 3"/>
</dbReference>
<dbReference type="Proteomes" id="UP000007752">
    <property type="component" value="Chromosome 3"/>
</dbReference>
<dbReference type="Proteomes" id="UP000059680">
    <property type="component" value="Chromosome 3"/>
</dbReference>
<dbReference type="GO" id="GO:0016020">
    <property type="term" value="C:membrane"/>
    <property type="evidence" value="ECO:0000318"/>
    <property type="project" value="GO_Central"/>
</dbReference>
<dbReference type="GO" id="GO:0015079">
    <property type="term" value="F:potassium ion transmembrane transporter activity"/>
    <property type="evidence" value="ECO:0000318"/>
    <property type="project" value="GO_Central"/>
</dbReference>
<dbReference type="GO" id="GO:0006813">
    <property type="term" value="P:potassium ion transport"/>
    <property type="evidence" value="ECO:0000318"/>
    <property type="project" value="GO_Central"/>
</dbReference>
<dbReference type="InterPro" id="IPR003855">
    <property type="entry name" value="K+_transporter"/>
</dbReference>
<dbReference type="InterPro" id="IPR053952">
    <property type="entry name" value="K_trans_C"/>
</dbReference>
<dbReference type="InterPro" id="IPR053951">
    <property type="entry name" value="K_trans_N"/>
</dbReference>
<dbReference type="NCBIfam" id="TIGR00794">
    <property type="entry name" value="kup"/>
    <property type="match status" value="1"/>
</dbReference>
<dbReference type="PANTHER" id="PTHR30540">
    <property type="entry name" value="OSMOTIC STRESS POTASSIUM TRANSPORTER"/>
    <property type="match status" value="1"/>
</dbReference>
<dbReference type="PANTHER" id="PTHR30540:SF6">
    <property type="entry name" value="POTASSIUM TRANSPORTER 2"/>
    <property type="match status" value="1"/>
</dbReference>
<dbReference type="Pfam" id="PF02705">
    <property type="entry name" value="K_trans"/>
    <property type="match status" value="1"/>
</dbReference>
<dbReference type="Pfam" id="PF22776">
    <property type="entry name" value="K_trans_C"/>
    <property type="match status" value="1"/>
</dbReference>
<keyword id="KW-0325">Glycoprotein</keyword>
<keyword id="KW-0406">Ion transport</keyword>
<keyword id="KW-0472">Membrane</keyword>
<keyword id="KW-0630">Potassium</keyword>
<keyword id="KW-0633">Potassium transport</keyword>
<keyword id="KW-1185">Reference proteome</keyword>
<keyword id="KW-0812">Transmembrane</keyword>
<keyword id="KW-1133">Transmembrane helix</keyword>
<keyword id="KW-0813">Transport</keyword>
<name>HAK8_ORYSJ</name>
<evidence type="ECO:0000250" key="1"/>
<evidence type="ECO:0000255" key="2"/>
<evidence type="ECO:0000256" key="3">
    <source>
        <dbReference type="SAM" id="MobiDB-lite"/>
    </source>
</evidence>
<evidence type="ECO:0000305" key="4"/>
<gene>
    <name type="primary">HAK8</name>
    <name type="ordered locus">Os03g0337500</name>
    <name type="ordered locus">LOC_Os03g21890</name>
    <name type="ORF">OsJ_10761</name>
</gene>
<comment type="function">
    <text evidence="1">High-affinity potassium transporter.</text>
</comment>
<comment type="subcellular location">
    <subcellularLocation>
        <location evidence="4">Membrane</location>
        <topology evidence="4">Multi-pass membrane protein</topology>
    </subcellularLocation>
</comment>
<comment type="similarity">
    <text evidence="4">Belongs to the HAK/KUP transporter (TC 2.A.72.3) family.</text>
</comment>
<comment type="sequence caution" evidence="4">
    <conflict type="erroneous gene model prediction">
        <sequence resource="EMBL-CDS" id="BAF11962"/>
    </conflict>
</comment>
<reference key="1">
    <citation type="journal article" date="2005" name="Genome Res.">
        <title>Sequence, annotation, and analysis of synteny between rice chromosome 3 and diverged grass species.</title>
        <authorList>
            <consortium name="The rice chromosome 3 sequencing consortium"/>
            <person name="Buell C.R."/>
            <person name="Yuan Q."/>
            <person name="Ouyang S."/>
            <person name="Liu J."/>
            <person name="Zhu W."/>
            <person name="Wang A."/>
            <person name="Maiti R."/>
            <person name="Haas B."/>
            <person name="Wortman J."/>
            <person name="Pertea M."/>
            <person name="Jones K.M."/>
            <person name="Kim M."/>
            <person name="Overton L."/>
            <person name="Tsitrin T."/>
            <person name="Fadrosh D."/>
            <person name="Bera J."/>
            <person name="Weaver B."/>
            <person name="Jin S."/>
            <person name="Johri S."/>
            <person name="Reardon M."/>
            <person name="Webb K."/>
            <person name="Hill J."/>
            <person name="Moffat K."/>
            <person name="Tallon L."/>
            <person name="Van Aken S."/>
            <person name="Lewis M."/>
            <person name="Utterback T."/>
            <person name="Feldblyum T."/>
            <person name="Zismann V."/>
            <person name="Iobst S."/>
            <person name="Hsiao J."/>
            <person name="de Vazeille A.R."/>
            <person name="Salzberg S.L."/>
            <person name="White O."/>
            <person name="Fraser C.M."/>
            <person name="Yu Y."/>
            <person name="Kim H."/>
            <person name="Rambo T."/>
            <person name="Currie J."/>
            <person name="Collura K."/>
            <person name="Kernodle-Thompson S."/>
            <person name="Wei F."/>
            <person name="Kudrna K."/>
            <person name="Ammiraju J.S.S."/>
            <person name="Luo M."/>
            <person name="Goicoechea J.L."/>
            <person name="Wing R.A."/>
            <person name="Henry D."/>
            <person name="Oates R."/>
            <person name="Palmer M."/>
            <person name="Pries G."/>
            <person name="Saski C."/>
            <person name="Simmons J."/>
            <person name="Soderlund C."/>
            <person name="Nelson W."/>
            <person name="de la Bastide M."/>
            <person name="Spiegel L."/>
            <person name="Nascimento L."/>
            <person name="Huang E."/>
            <person name="Preston R."/>
            <person name="Zutavern T."/>
            <person name="Palmer L."/>
            <person name="O'Shaughnessy A."/>
            <person name="Dike S."/>
            <person name="McCombie W.R."/>
            <person name="Minx P."/>
            <person name="Cordum H."/>
            <person name="Wilson R."/>
            <person name="Jin W."/>
            <person name="Lee H.R."/>
            <person name="Jiang J."/>
            <person name="Jackson S."/>
        </authorList>
    </citation>
    <scope>NUCLEOTIDE SEQUENCE [LARGE SCALE GENOMIC DNA]</scope>
    <source>
        <strain>cv. Nipponbare</strain>
    </source>
</reference>
<reference key="2">
    <citation type="journal article" date="2005" name="Nature">
        <title>The map-based sequence of the rice genome.</title>
        <authorList>
            <consortium name="International rice genome sequencing project (IRGSP)"/>
        </authorList>
    </citation>
    <scope>NUCLEOTIDE SEQUENCE [LARGE SCALE GENOMIC DNA]</scope>
    <source>
        <strain>cv. Nipponbare</strain>
    </source>
</reference>
<reference key="3">
    <citation type="journal article" date="2008" name="Nucleic Acids Res.">
        <title>The rice annotation project database (RAP-DB): 2008 update.</title>
        <authorList>
            <consortium name="The rice annotation project (RAP)"/>
        </authorList>
    </citation>
    <scope>GENOME REANNOTATION</scope>
    <source>
        <strain>cv. Nipponbare</strain>
    </source>
</reference>
<reference key="4">
    <citation type="journal article" date="2013" name="Rice">
        <title>Improvement of the Oryza sativa Nipponbare reference genome using next generation sequence and optical map data.</title>
        <authorList>
            <person name="Kawahara Y."/>
            <person name="de la Bastide M."/>
            <person name="Hamilton J.P."/>
            <person name="Kanamori H."/>
            <person name="McCombie W.R."/>
            <person name="Ouyang S."/>
            <person name="Schwartz D.C."/>
            <person name="Tanaka T."/>
            <person name="Wu J."/>
            <person name="Zhou S."/>
            <person name="Childs K.L."/>
            <person name="Davidson R.M."/>
            <person name="Lin H."/>
            <person name="Quesada-Ocampo L."/>
            <person name="Vaillancourt B."/>
            <person name="Sakai H."/>
            <person name="Lee S.S."/>
            <person name="Kim J."/>
            <person name="Numa H."/>
            <person name="Itoh T."/>
            <person name="Buell C.R."/>
            <person name="Matsumoto T."/>
        </authorList>
    </citation>
    <scope>GENOME REANNOTATION</scope>
    <source>
        <strain>cv. Nipponbare</strain>
    </source>
</reference>
<reference key="5">
    <citation type="journal article" date="2005" name="PLoS Biol.">
        <title>The genomes of Oryza sativa: a history of duplications.</title>
        <authorList>
            <person name="Yu J."/>
            <person name="Wang J."/>
            <person name="Lin W."/>
            <person name="Li S."/>
            <person name="Li H."/>
            <person name="Zhou J."/>
            <person name="Ni P."/>
            <person name="Dong W."/>
            <person name="Hu S."/>
            <person name="Zeng C."/>
            <person name="Zhang J."/>
            <person name="Zhang Y."/>
            <person name="Li R."/>
            <person name="Xu Z."/>
            <person name="Li S."/>
            <person name="Li X."/>
            <person name="Zheng H."/>
            <person name="Cong L."/>
            <person name="Lin L."/>
            <person name="Yin J."/>
            <person name="Geng J."/>
            <person name="Li G."/>
            <person name="Shi J."/>
            <person name="Liu J."/>
            <person name="Lv H."/>
            <person name="Li J."/>
            <person name="Wang J."/>
            <person name="Deng Y."/>
            <person name="Ran L."/>
            <person name="Shi X."/>
            <person name="Wang X."/>
            <person name="Wu Q."/>
            <person name="Li C."/>
            <person name="Ren X."/>
            <person name="Wang J."/>
            <person name="Wang X."/>
            <person name="Li D."/>
            <person name="Liu D."/>
            <person name="Zhang X."/>
            <person name="Ji Z."/>
            <person name="Zhao W."/>
            <person name="Sun Y."/>
            <person name="Zhang Z."/>
            <person name="Bao J."/>
            <person name="Han Y."/>
            <person name="Dong L."/>
            <person name="Ji J."/>
            <person name="Chen P."/>
            <person name="Wu S."/>
            <person name="Liu J."/>
            <person name="Xiao Y."/>
            <person name="Bu D."/>
            <person name="Tan J."/>
            <person name="Yang L."/>
            <person name="Ye C."/>
            <person name="Zhang J."/>
            <person name="Xu J."/>
            <person name="Zhou Y."/>
            <person name="Yu Y."/>
            <person name="Zhang B."/>
            <person name="Zhuang S."/>
            <person name="Wei H."/>
            <person name="Liu B."/>
            <person name="Lei M."/>
            <person name="Yu H."/>
            <person name="Li Y."/>
            <person name="Xu H."/>
            <person name="Wei S."/>
            <person name="He X."/>
            <person name="Fang L."/>
            <person name="Zhang Z."/>
            <person name="Zhang Y."/>
            <person name="Huang X."/>
            <person name="Su Z."/>
            <person name="Tong W."/>
            <person name="Li J."/>
            <person name="Tong Z."/>
            <person name="Li S."/>
            <person name="Ye J."/>
            <person name="Wang L."/>
            <person name="Fang L."/>
            <person name="Lei T."/>
            <person name="Chen C.-S."/>
            <person name="Chen H.-C."/>
            <person name="Xu Z."/>
            <person name="Li H."/>
            <person name="Huang H."/>
            <person name="Zhang F."/>
            <person name="Xu H."/>
            <person name="Li N."/>
            <person name="Zhao C."/>
            <person name="Li S."/>
            <person name="Dong L."/>
            <person name="Huang Y."/>
            <person name="Li L."/>
            <person name="Xi Y."/>
            <person name="Qi Q."/>
            <person name="Li W."/>
            <person name="Zhang B."/>
            <person name="Hu W."/>
            <person name="Zhang Y."/>
            <person name="Tian X."/>
            <person name="Jiao Y."/>
            <person name="Liang X."/>
            <person name="Jin J."/>
            <person name="Gao L."/>
            <person name="Zheng W."/>
            <person name="Hao B."/>
            <person name="Liu S.-M."/>
            <person name="Wang W."/>
            <person name="Yuan L."/>
            <person name="Cao M."/>
            <person name="McDermott J."/>
            <person name="Samudrala R."/>
            <person name="Wang J."/>
            <person name="Wong G.K.-S."/>
            <person name="Yang H."/>
        </authorList>
    </citation>
    <scope>NUCLEOTIDE SEQUENCE [LARGE SCALE GENOMIC DNA]</scope>
    <source>
        <strain>cv. Nipponbare</strain>
    </source>
</reference>
<reference key="6">
    <citation type="journal article" date="2002" name="Plant Physiol.">
        <title>Inventory and functional characterization of the HAK potassium transporters of rice.</title>
        <authorList>
            <person name="Banuelos M.A."/>
            <person name="Garciadeblas B."/>
            <person name="Cubero B."/>
            <person name="Rodriguez-Navarro A."/>
        </authorList>
    </citation>
    <scope>NUCLEOTIDE SEQUENCE [GENOMIC DNA] OF 93-793</scope>
    <scope>NOMENCLATURE</scope>
    <source>
        <strain>cv. Nipponbare</strain>
    </source>
</reference>
<reference key="7">
    <citation type="journal article" date="2009" name="J. Genet. Genomics">
        <title>Molecular evolution and functional divergence of HAK potassium transporter gene family in rice (Oryza sativa L.).</title>
        <authorList>
            <person name="Yang Z."/>
            <person name="Gao Q."/>
            <person name="Sun C."/>
            <person name="Li W."/>
            <person name="Gu S."/>
            <person name="Xu C."/>
        </authorList>
    </citation>
    <scope>GENE FAMILY</scope>
</reference>
<feature type="chain" id="PRO_0000209095" description="Putative potassium transporter 8">
    <location>
        <begin position="1"/>
        <end position="793"/>
    </location>
</feature>
<feature type="topological domain" description="Cytoplasmic" evidence="2">
    <location>
        <begin position="1"/>
        <end position="22"/>
    </location>
</feature>
<feature type="transmembrane region" description="Helical; Name=1" evidence="2">
    <location>
        <begin position="23"/>
        <end position="43"/>
    </location>
</feature>
<feature type="topological domain" description="Extracellular" evidence="2">
    <location>
        <begin position="44"/>
        <end position="59"/>
    </location>
</feature>
<feature type="transmembrane region" description="Helical; Name=2" evidence="2">
    <location>
        <begin position="60"/>
        <end position="80"/>
    </location>
</feature>
<feature type="topological domain" description="Cytoplasmic" evidence="2">
    <location>
        <begin position="81"/>
        <end position="151"/>
    </location>
</feature>
<feature type="transmembrane region" description="Helical; Name=3" evidence="2">
    <location>
        <begin position="152"/>
        <end position="172"/>
    </location>
</feature>
<feature type="topological domain" description="Extracellular" evidence="2">
    <location>
        <begin position="173"/>
        <end position="191"/>
    </location>
</feature>
<feature type="transmembrane region" description="Helical; Name=4" evidence="2">
    <location>
        <begin position="192"/>
        <end position="212"/>
    </location>
</feature>
<feature type="topological domain" description="Cytoplasmic" evidence="2">
    <location>
        <begin position="213"/>
        <end position="215"/>
    </location>
</feature>
<feature type="transmembrane region" description="Helical; Name=5" evidence="2">
    <location>
        <begin position="216"/>
        <end position="236"/>
    </location>
</feature>
<feature type="topological domain" description="Extracellular" evidence="2">
    <location>
        <begin position="237"/>
        <end position="264"/>
    </location>
</feature>
<feature type="transmembrane region" description="Helical; Name=6" evidence="2">
    <location>
        <begin position="265"/>
        <end position="285"/>
    </location>
</feature>
<feature type="topological domain" description="Cytoplasmic" evidence="2">
    <location>
        <begin position="286"/>
        <end position="292"/>
    </location>
</feature>
<feature type="transmembrane region" description="Helical; Name=7" evidence="2">
    <location>
        <begin position="293"/>
        <end position="313"/>
    </location>
</feature>
<feature type="topological domain" description="Extracellular" evidence="2">
    <location>
        <begin position="314"/>
        <end position="343"/>
    </location>
</feature>
<feature type="transmembrane region" description="Helical; Name=8" evidence="2">
    <location>
        <begin position="344"/>
        <end position="364"/>
    </location>
</feature>
<feature type="topological domain" description="Cytoplasmic" evidence="2">
    <location>
        <begin position="365"/>
        <end position="391"/>
    </location>
</feature>
<feature type="transmembrane region" description="Helical; Name=9" evidence="2">
    <location>
        <begin position="392"/>
        <end position="412"/>
    </location>
</feature>
<feature type="topological domain" description="Extracellular" evidence="2">
    <location>
        <begin position="413"/>
        <end position="422"/>
    </location>
</feature>
<feature type="transmembrane region" description="Helical; Name=10" evidence="2">
    <location>
        <begin position="423"/>
        <end position="443"/>
    </location>
</feature>
<feature type="topological domain" description="Cytoplasmic" evidence="2">
    <location>
        <begin position="444"/>
        <end position="448"/>
    </location>
</feature>
<feature type="transmembrane region" description="Helical; Name=11" evidence="2">
    <location>
        <begin position="449"/>
        <end position="469"/>
    </location>
</feature>
<feature type="topological domain" description="Extracellular" evidence="2">
    <location>
        <begin position="470"/>
        <end position="473"/>
    </location>
</feature>
<feature type="transmembrane region" description="Helical; Name=12" evidence="2">
    <location>
        <begin position="474"/>
        <end position="494"/>
    </location>
</feature>
<feature type="topological domain" description="Cytoplasmic" evidence="2">
    <location>
        <begin position="495"/>
        <end position="793"/>
    </location>
</feature>
<feature type="region of interest" description="Disordered" evidence="3">
    <location>
        <begin position="664"/>
        <end position="698"/>
    </location>
</feature>
<feature type="compositionally biased region" description="Polar residues" evidence="3">
    <location>
        <begin position="664"/>
        <end position="675"/>
    </location>
</feature>
<feature type="glycosylation site" description="N-linked (GlcNAc...) asparagine" evidence="2">
    <location>
        <position position="420"/>
    </location>
</feature>
<protein>
    <recommendedName>
        <fullName>Putative potassium transporter 8</fullName>
    </recommendedName>
    <alternativeName>
        <fullName>OsHAK8</fullName>
    </alternativeName>
</protein>
<proteinExistence type="inferred from homology"/>
<organism>
    <name type="scientific">Oryza sativa subsp. japonica</name>
    <name type="common">Rice</name>
    <dbReference type="NCBI Taxonomy" id="39947"/>
    <lineage>
        <taxon>Eukaryota</taxon>
        <taxon>Viridiplantae</taxon>
        <taxon>Streptophyta</taxon>
        <taxon>Embryophyta</taxon>
        <taxon>Tracheophyta</taxon>
        <taxon>Spermatophyta</taxon>
        <taxon>Magnoliopsida</taxon>
        <taxon>Liliopsida</taxon>
        <taxon>Poales</taxon>
        <taxon>Poaceae</taxon>
        <taxon>BOP clade</taxon>
        <taxon>Oryzoideae</taxon>
        <taxon>Oryzeae</taxon>
        <taxon>Oryzinae</taxon>
        <taxon>Oryza</taxon>
        <taxon>Oryza sativa</taxon>
    </lineage>
</organism>
<sequence length="793" mass="87653">MDLEFGRGMRSPQRDSWKTTLLLAYQSLGVVYGDLSISPLYVFKSTFAEDIQHSETNEEIFGVLSFVFWTLTLIPLIKYVSIVLRADDNGEGGTFALYSLICRHANVSLLPNRQIADEELSTYKLECSSERTDKSCIKVWLEKHKKLHTALLIMVLIGTCMVIGDGVLTPAISVFSAVSGLEFSLSKDHREYAVIPITCVILAFLFALQHYGTHRVGFLFAPIVLAWLICMSALGLYNIIHWNPHVYQALNPCYMFKFLKKTRKYGWMSLGGILLCMTGSEAMFADLGHFSYSAIQLAFTSLVYPALILAYMGQAAYLSKHHDFYSNSQVGFYIAVPDKVRWPVLVLAILASVVGSQAIISGTFSIINQSQSLSCFPRVKVVHTSDKIHGQIYIPEINWLLMILCIAVTVGFRDTKHMGNASGLAVITVMLVTTCLTSLVIMLCWRRPPVLALCFLLFFGSVEALYFSASLIKFLEGAWLPILLALFLMAVMLVWHYTTIKKYEFDLHNKVTLEWLLALGDKLGMVRVPGIGLVYTDLTSGVPANFSRFVTNLPAFHQVLVFVCVKSVPVPYVFPAERYLIGRVGPPGHRSYRCIVRYGYRDVHQDVDSFETELVESLATFIKLDASYRCSDASGGGGDHEPEEERGTRLAVIGSSHASYDIQDSVQHSSAASVETTTTRRRSGGGDDDGSPGGGGGRAKQVRFFIDSHVASPEAADNKQVAEELEALAAARDAGTAFILGHSHVQCKPGSSLLKRLAVDVGYNFLRRNCRGPDVALRVPPASLLEVGMVYVL</sequence>
<accession>Q8VXB5</accession>
<accession>Q0DS26</accession>
<accession>Q10LS0</accession>